<evidence type="ECO:0000255" key="1"/>
<evidence type="ECO:0000255" key="2">
    <source>
        <dbReference type="PROSITE-ProRule" id="PRU00498"/>
    </source>
</evidence>
<evidence type="ECO:0000255" key="3">
    <source>
        <dbReference type="RuleBase" id="RU369020"/>
    </source>
</evidence>
<evidence type="ECO:0000269" key="4">
    <source>
    </source>
</evidence>
<evidence type="ECO:0000269" key="5">
    <source>
    </source>
</evidence>
<evidence type="ECO:0000269" key="6">
    <source>
    </source>
</evidence>
<evidence type="ECO:0000305" key="7"/>
<evidence type="ECO:0000305" key="8">
    <source>
    </source>
</evidence>
<evidence type="ECO:0000312" key="9">
    <source>
        <dbReference type="EMBL" id="AAL28674.1"/>
    </source>
</evidence>
<evidence type="ECO:0000312" key="10">
    <source>
        <dbReference type="EMBL" id="ANY27163.1"/>
    </source>
</evidence>
<evidence type="ECO:0000312" key="11">
    <source>
        <dbReference type="EMBL" id="CAQ53595.1"/>
    </source>
</evidence>
<evidence type="ECO:0000312" key="12">
    <source>
        <dbReference type="EMBL" id="CAQ53596.1"/>
    </source>
</evidence>
<evidence type="ECO:0000312" key="13">
    <source>
        <dbReference type="EMBL" id="CAQ53597.1"/>
    </source>
</evidence>
<evidence type="ECO:0000312" key="14">
    <source>
        <dbReference type="EMBL" id="CAR94264.1"/>
    </source>
</evidence>
<evidence type="ECO:0000312" key="15">
    <source>
        <dbReference type="EMBL" id="CAR94265.1"/>
    </source>
</evidence>
<evidence type="ECO:0000312" key="16">
    <source>
        <dbReference type="EMBL" id="CAR94266.1"/>
    </source>
</evidence>
<evidence type="ECO:0000312" key="17">
    <source>
        <dbReference type="EMBL" id="CAR94267.1"/>
    </source>
</evidence>
<evidence type="ECO:0000312" key="18">
    <source>
        <dbReference type="EMBL" id="CAR94269.1"/>
    </source>
</evidence>
<evidence type="ECO:0000312" key="19">
    <source>
        <dbReference type="EMBL" id="CAR94270.1"/>
    </source>
</evidence>
<evidence type="ECO:0000312" key="20">
    <source>
        <dbReference type="EMBL" id="CAR94271.1"/>
    </source>
</evidence>
<evidence type="ECO:0000312" key="21">
    <source>
        <dbReference type="FlyBase" id="FBgn0261277"/>
    </source>
</evidence>
<evidence type="ECO:0000312" key="22">
    <source>
        <dbReference type="Proteomes" id="UP000000803"/>
    </source>
</evidence>
<gene>
    <name evidence="21" type="primary">rtv</name>
    <name evidence="21" type="synonym">l(1)L1</name>
    <name evidence="21" type="ORF">CG1397</name>
</gene>
<reference evidence="11" key="1">
    <citation type="journal article" date="2008" name="Mol. Biol. Evol.">
        <title>Effects of X-linkage and sex-biased gene expression on the rate of adaptive protein evolution in Drosophila.</title>
        <authorList>
            <person name="Baines J.F."/>
            <person name="Sawyer S.A."/>
            <person name="Hartl D.L."/>
            <person name="Parsch J."/>
        </authorList>
    </citation>
    <scope>NUCLEOTIDE SEQUENCE [GENOMIC DNA]</scope>
    <source>
        <strain evidence="11">ZBMEL377</strain>
        <strain evidence="12">ZBMEL384</strain>
        <strain evidence="13">ZBMEL398</strain>
    </source>
</reference>
<reference evidence="14" key="2">
    <citation type="journal article" date="2009" name="Mol. Biol. Evol.">
        <title>The influence of demography and weak selection on the McDonald-Kreitman test: an empirical study in Drosophila.</title>
        <authorList>
            <person name="Parsch J."/>
            <person name="Zhang Z."/>
            <person name="Baines J.F."/>
        </authorList>
    </citation>
    <scope>NUCLEOTIDE SEQUENCE [GENOMIC DNA]</scope>
    <source>
        <strain evidence="14">MEL01</strain>
        <strain evidence="15">MEL02</strain>
        <strain evidence="16">MEL11</strain>
        <strain evidence="17">MEL12</strain>
        <strain evidence="18">MEL14</strain>
        <strain evidence="19">MEL15</strain>
        <strain evidence="20">MEL16</strain>
    </source>
</reference>
<reference evidence="22" key="3">
    <citation type="journal article" date="2000" name="Science">
        <title>The genome sequence of Drosophila melanogaster.</title>
        <authorList>
            <person name="Adams M.D."/>
            <person name="Celniker S.E."/>
            <person name="Holt R.A."/>
            <person name="Evans C.A."/>
            <person name="Gocayne J.D."/>
            <person name="Amanatides P.G."/>
            <person name="Scherer S.E."/>
            <person name="Li P.W."/>
            <person name="Hoskins R.A."/>
            <person name="Galle R.F."/>
            <person name="George R.A."/>
            <person name="Lewis S.E."/>
            <person name="Richards S."/>
            <person name="Ashburner M."/>
            <person name="Henderson S.N."/>
            <person name="Sutton G.G."/>
            <person name="Wortman J.R."/>
            <person name="Yandell M.D."/>
            <person name="Zhang Q."/>
            <person name="Chen L.X."/>
            <person name="Brandon R.C."/>
            <person name="Rogers Y.-H.C."/>
            <person name="Blazej R.G."/>
            <person name="Champe M."/>
            <person name="Pfeiffer B.D."/>
            <person name="Wan K.H."/>
            <person name="Doyle C."/>
            <person name="Baxter E.G."/>
            <person name="Helt G."/>
            <person name="Nelson C.R."/>
            <person name="Miklos G.L.G."/>
            <person name="Abril J.F."/>
            <person name="Agbayani A."/>
            <person name="An H.-J."/>
            <person name="Andrews-Pfannkoch C."/>
            <person name="Baldwin D."/>
            <person name="Ballew R.M."/>
            <person name="Basu A."/>
            <person name="Baxendale J."/>
            <person name="Bayraktaroglu L."/>
            <person name="Beasley E.M."/>
            <person name="Beeson K.Y."/>
            <person name="Benos P.V."/>
            <person name="Berman B.P."/>
            <person name="Bhandari D."/>
            <person name="Bolshakov S."/>
            <person name="Borkova D."/>
            <person name="Botchan M.R."/>
            <person name="Bouck J."/>
            <person name="Brokstein P."/>
            <person name="Brottier P."/>
            <person name="Burtis K.C."/>
            <person name="Busam D.A."/>
            <person name="Butler H."/>
            <person name="Cadieu E."/>
            <person name="Center A."/>
            <person name="Chandra I."/>
            <person name="Cherry J.M."/>
            <person name="Cawley S."/>
            <person name="Dahlke C."/>
            <person name="Davenport L.B."/>
            <person name="Davies P."/>
            <person name="de Pablos B."/>
            <person name="Delcher A."/>
            <person name="Deng Z."/>
            <person name="Mays A.D."/>
            <person name="Dew I."/>
            <person name="Dietz S.M."/>
            <person name="Dodson K."/>
            <person name="Doup L.E."/>
            <person name="Downes M."/>
            <person name="Dugan-Rocha S."/>
            <person name="Dunkov B.C."/>
            <person name="Dunn P."/>
            <person name="Durbin K.J."/>
            <person name="Evangelista C.C."/>
            <person name="Ferraz C."/>
            <person name="Ferriera S."/>
            <person name="Fleischmann W."/>
            <person name="Fosler C."/>
            <person name="Gabrielian A.E."/>
            <person name="Garg N.S."/>
            <person name="Gelbart W.M."/>
            <person name="Glasser K."/>
            <person name="Glodek A."/>
            <person name="Gong F."/>
            <person name="Gorrell J.H."/>
            <person name="Gu Z."/>
            <person name="Guan P."/>
            <person name="Harris M."/>
            <person name="Harris N.L."/>
            <person name="Harvey D.A."/>
            <person name="Heiman T.J."/>
            <person name="Hernandez J.R."/>
            <person name="Houck J."/>
            <person name="Hostin D."/>
            <person name="Houston K.A."/>
            <person name="Howland T.J."/>
            <person name="Wei M.-H."/>
            <person name="Ibegwam C."/>
            <person name="Jalali M."/>
            <person name="Kalush F."/>
            <person name="Karpen G.H."/>
            <person name="Ke Z."/>
            <person name="Kennison J.A."/>
            <person name="Ketchum K.A."/>
            <person name="Kimmel B.E."/>
            <person name="Kodira C.D."/>
            <person name="Kraft C.L."/>
            <person name="Kravitz S."/>
            <person name="Kulp D."/>
            <person name="Lai Z."/>
            <person name="Lasko P."/>
            <person name="Lei Y."/>
            <person name="Levitsky A.A."/>
            <person name="Li J.H."/>
            <person name="Li Z."/>
            <person name="Liang Y."/>
            <person name="Lin X."/>
            <person name="Liu X."/>
            <person name="Mattei B."/>
            <person name="McIntosh T.C."/>
            <person name="McLeod M.P."/>
            <person name="McPherson D."/>
            <person name="Merkulov G."/>
            <person name="Milshina N.V."/>
            <person name="Mobarry C."/>
            <person name="Morris J."/>
            <person name="Moshrefi A."/>
            <person name="Mount S.M."/>
            <person name="Moy M."/>
            <person name="Murphy B."/>
            <person name="Murphy L."/>
            <person name="Muzny D.M."/>
            <person name="Nelson D.L."/>
            <person name="Nelson D.R."/>
            <person name="Nelson K.A."/>
            <person name="Nixon K."/>
            <person name="Nusskern D.R."/>
            <person name="Pacleb J.M."/>
            <person name="Palazzolo M."/>
            <person name="Pittman G.S."/>
            <person name="Pan S."/>
            <person name="Pollard J."/>
            <person name="Puri V."/>
            <person name="Reese M.G."/>
            <person name="Reinert K."/>
            <person name="Remington K."/>
            <person name="Saunders R.D.C."/>
            <person name="Scheeler F."/>
            <person name="Shen H."/>
            <person name="Shue B.C."/>
            <person name="Siden-Kiamos I."/>
            <person name="Simpson M."/>
            <person name="Skupski M.P."/>
            <person name="Smith T.J."/>
            <person name="Spier E."/>
            <person name="Spradling A.C."/>
            <person name="Stapleton M."/>
            <person name="Strong R."/>
            <person name="Sun E."/>
            <person name="Svirskas R."/>
            <person name="Tector C."/>
            <person name="Turner R."/>
            <person name="Venter E."/>
            <person name="Wang A.H."/>
            <person name="Wang X."/>
            <person name="Wang Z.-Y."/>
            <person name="Wassarman D.A."/>
            <person name="Weinstock G.M."/>
            <person name="Weissenbach J."/>
            <person name="Williams S.M."/>
            <person name="Woodage T."/>
            <person name="Worley K.C."/>
            <person name="Wu D."/>
            <person name="Yang S."/>
            <person name="Yao Q.A."/>
            <person name="Ye J."/>
            <person name="Yeh R.-F."/>
            <person name="Zaveri J.S."/>
            <person name="Zhan M."/>
            <person name="Zhang G."/>
            <person name="Zhao Q."/>
            <person name="Zheng L."/>
            <person name="Zheng X.H."/>
            <person name="Zhong F.N."/>
            <person name="Zhong W."/>
            <person name="Zhou X."/>
            <person name="Zhu S.C."/>
            <person name="Zhu X."/>
            <person name="Smith H.O."/>
            <person name="Gibbs R.A."/>
            <person name="Myers E.W."/>
            <person name="Rubin G.M."/>
            <person name="Venter J.C."/>
        </authorList>
    </citation>
    <scope>NUCLEOTIDE SEQUENCE [LARGE SCALE GENOMIC DNA]</scope>
    <source>
        <strain evidence="22">Berkeley</strain>
    </source>
</reference>
<reference evidence="22" key="4">
    <citation type="journal article" date="2002" name="Genome Biol.">
        <title>Annotation of the Drosophila melanogaster euchromatic genome: a systematic review.</title>
        <authorList>
            <person name="Misra S."/>
            <person name="Crosby M.A."/>
            <person name="Mungall C.J."/>
            <person name="Matthews B.B."/>
            <person name="Campbell K.S."/>
            <person name="Hradecky P."/>
            <person name="Huang Y."/>
            <person name="Kaminker J.S."/>
            <person name="Millburn G.H."/>
            <person name="Prochnik S.E."/>
            <person name="Smith C.D."/>
            <person name="Tupy J.L."/>
            <person name="Whitfield E.J."/>
            <person name="Bayraktaroglu L."/>
            <person name="Berman B.P."/>
            <person name="Bettencourt B.R."/>
            <person name="Celniker S.E."/>
            <person name="de Grey A.D.N.J."/>
            <person name="Drysdale R.A."/>
            <person name="Harris N.L."/>
            <person name="Richter J."/>
            <person name="Russo S."/>
            <person name="Schroeder A.J."/>
            <person name="Shu S.Q."/>
            <person name="Stapleton M."/>
            <person name="Yamada C."/>
            <person name="Ashburner M."/>
            <person name="Gelbart W.M."/>
            <person name="Rubin G.M."/>
            <person name="Lewis S.E."/>
        </authorList>
    </citation>
    <scope>GENOME REANNOTATION</scope>
    <source>
        <strain evidence="22">Berkeley</strain>
    </source>
</reference>
<reference evidence="9" key="5">
    <citation type="journal article" date="2002" name="Genome Biol.">
        <title>A Drosophila full-length cDNA resource.</title>
        <authorList>
            <person name="Stapleton M."/>
            <person name="Carlson J.W."/>
            <person name="Brokstein P."/>
            <person name="Yu C."/>
            <person name="Champe M."/>
            <person name="George R.A."/>
            <person name="Guarin H."/>
            <person name="Kronmiller B."/>
            <person name="Pacleb J.M."/>
            <person name="Park S."/>
            <person name="Wan K.H."/>
            <person name="Rubin G.M."/>
            <person name="Celniker S.E."/>
        </authorList>
    </citation>
    <scope>NUCLEOTIDE SEQUENCE [LARGE SCALE MRNA] (ISOFORM A)</scope>
    <source>
        <strain evidence="9">Berkeley</strain>
        <tissue evidence="9">Embryo</tissue>
    </source>
</reference>
<reference evidence="10" key="6">
    <citation type="submission" date="2016-07" db="EMBL/GenBank/DDBJ databases">
        <authorList>
            <person name="Wan K."/>
            <person name="Booth B."/>
            <person name="Spirohn K."/>
            <person name="Hao T."/>
            <person name="Hu Y."/>
            <person name="Calderwood M."/>
            <person name="Hill D."/>
            <person name="Mohr S."/>
            <person name="Vidal M."/>
            <person name="Celniker S."/>
            <person name="Perrimon N."/>
        </authorList>
    </citation>
    <scope>NUCLEOTIDE SEQUENCE [LARGE SCALE MRNA] (ISOFORM A)</scope>
</reference>
<reference evidence="7" key="7">
    <citation type="journal article" date="2005" name="Dev. Dyn.">
        <title>Retroactive, a membrane-anchored extracellular protein related to vertebrate snake neurotoxin-like proteins, is required for cuticle organization in the larva of Drosophila melanogaster.</title>
        <authorList>
            <person name="Moussian B."/>
            <person name="Soeding J."/>
            <person name="Schwarz H."/>
            <person name="Nuesslein-Volhard C."/>
        </authorList>
    </citation>
    <scope>FUNCTION</scope>
    <scope>DEVELOPMENTAL STAGE</scope>
    <scope>DISRUPTION PHENOTYPE</scope>
</reference>
<reference evidence="7" key="8">
    <citation type="journal article" date="2006" name="Development">
        <title>Drosophila Knickkopf and Retroactive are needed for epithelial tube growth and cuticle differentiation through their specific requirement for chitin filament organization.</title>
        <authorList>
            <person name="Moussian B."/>
            <person name="Taang E."/>
            <person name="Tonning A."/>
            <person name="Helms S."/>
            <person name="Schwarz H."/>
            <person name="Nuesslein-Volhard C."/>
            <person name="Uv A.E."/>
        </authorList>
    </citation>
    <scope>FUNCTION</scope>
    <scope>DISRUPTION PHENOTYPE</scope>
</reference>
<reference evidence="7" key="9">
    <citation type="journal article" date="2009" name="Development">
        <title>boudin is required for septate junction organisation in Drosophila and codes for a diffusible protein of the Ly6 superfamily.</title>
        <authorList>
            <person name="Hijazi A."/>
            <person name="Masson W."/>
            <person name="Auge B."/>
            <person name="Waltzer L."/>
            <person name="Haenlin M."/>
            <person name="Roch F."/>
        </authorList>
    </citation>
    <scope>FUNCTION</scope>
    <scope>DISRUPTION PHENOTYPE</scope>
</reference>
<dbReference type="EMBL" id="AM999233">
    <property type="protein sequence ID" value="CAQ53595.1"/>
    <property type="molecule type" value="Genomic_DNA"/>
</dbReference>
<dbReference type="EMBL" id="AM999234">
    <property type="protein sequence ID" value="CAQ53596.1"/>
    <property type="molecule type" value="Genomic_DNA"/>
</dbReference>
<dbReference type="EMBL" id="AM999235">
    <property type="protein sequence ID" value="CAQ53597.1"/>
    <property type="molecule type" value="Genomic_DNA"/>
</dbReference>
<dbReference type="EMBL" id="FM246338">
    <property type="protein sequence ID" value="CAR94264.1"/>
    <property type="molecule type" value="Genomic_DNA"/>
</dbReference>
<dbReference type="EMBL" id="FM246339">
    <property type="protein sequence ID" value="CAR94265.1"/>
    <property type="molecule type" value="Genomic_DNA"/>
</dbReference>
<dbReference type="EMBL" id="FM246340">
    <property type="protein sequence ID" value="CAR94266.1"/>
    <property type="molecule type" value="Genomic_DNA"/>
</dbReference>
<dbReference type="EMBL" id="FM246341">
    <property type="protein sequence ID" value="CAR94267.1"/>
    <property type="molecule type" value="Genomic_DNA"/>
</dbReference>
<dbReference type="EMBL" id="FM246343">
    <property type="protein sequence ID" value="CAR94269.1"/>
    <property type="molecule type" value="Genomic_DNA"/>
</dbReference>
<dbReference type="EMBL" id="FM246344">
    <property type="protein sequence ID" value="CAR94270.1"/>
    <property type="molecule type" value="Genomic_DNA"/>
</dbReference>
<dbReference type="EMBL" id="FM246345">
    <property type="protein sequence ID" value="CAR94271.1"/>
    <property type="molecule type" value="Genomic_DNA"/>
</dbReference>
<dbReference type="EMBL" id="AE014298">
    <property type="protein sequence ID" value="AAF48010.1"/>
    <property type="molecule type" value="Genomic_DNA"/>
</dbReference>
<dbReference type="EMBL" id="AE014298">
    <property type="protein sequence ID" value="AGB95285.1"/>
    <property type="molecule type" value="Genomic_DNA"/>
</dbReference>
<dbReference type="EMBL" id="AE014298">
    <property type="protein sequence ID" value="AGB95286.1"/>
    <property type="molecule type" value="Genomic_DNA"/>
</dbReference>
<dbReference type="EMBL" id="AE014298">
    <property type="protein sequence ID" value="AHN59584.1"/>
    <property type="molecule type" value="Genomic_DNA"/>
</dbReference>
<dbReference type="EMBL" id="AY061126">
    <property type="protein sequence ID" value="AAL28674.1"/>
    <property type="molecule type" value="mRNA"/>
</dbReference>
<dbReference type="EMBL" id="KX531353">
    <property type="protein sequence ID" value="ANY27163.1"/>
    <property type="molecule type" value="mRNA"/>
</dbReference>
<dbReference type="RefSeq" id="NP_001259442.1">
    <molecule id="Q9VZ21-1"/>
    <property type="nucleotide sequence ID" value="NM_001272513.2"/>
</dbReference>
<dbReference type="RefSeq" id="NP_001259443.1">
    <molecule id="Q9VZ21-2"/>
    <property type="nucleotide sequence ID" value="NM_001272514.2"/>
</dbReference>
<dbReference type="RefSeq" id="NP_001285114.1">
    <molecule id="Q9VZ21-1"/>
    <property type="nucleotide sequence ID" value="NM_001298185.1"/>
</dbReference>
<dbReference type="RefSeq" id="NP_572693.1">
    <molecule id="Q9VZ21-1"/>
    <property type="nucleotide sequence ID" value="NM_132465.4"/>
</dbReference>
<dbReference type="FunCoup" id="Q9VZ21">
    <property type="interactions" value="1"/>
</dbReference>
<dbReference type="IntAct" id="Q9VZ21">
    <property type="interactions" value="8"/>
</dbReference>
<dbReference type="STRING" id="7227.FBpp0304131"/>
<dbReference type="GlyGen" id="Q9VZ21">
    <property type="glycosylation" value="1 site"/>
</dbReference>
<dbReference type="PaxDb" id="7227-FBpp0304131"/>
<dbReference type="DNASU" id="32056"/>
<dbReference type="EnsemblMetazoa" id="FBtr0073470">
    <molecule id="Q9VZ21-1"/>
    <property type="protein sequence ID" value="FBpp0073326"/>
    <property type="gene ID" value="FBgn0261277"/>
</dbReference>
<dbReference type="EnsemblMetazoa" id="FBtr0331742">
    <molecule id="Q9VZ21-1"/>
    <property type="protein sequence ID" value="FBpp0304131"/>
    <property type="gene ID" value="FBgn0261277"/>
</dbReference>
<dbReference type="EnsemblMetazoa" id="FBtr0331743">
    <molecule id="Q9VZ21-2"/>
    <property type="protein sequence ID" value="FBpp0304132"/>
    <property type="gene ID" value="FBgn0261277"/>
</dbReference>
<dbReference type="EnsemblMetazoa" id="FBtr0346379">
    <molecule id="Q9VZ21-1"/>
    <property type="protein sequence ID" value="FBpp0312073"/>
    <property type="gene ID" value="FBgn0261277"/>
</dbReference>
<dbReference type="GeneID" id="32056"/>
<dbReference type="KEGG" id="dme:Dmel_CG1397"/>
<dbReference type="UCSC" id="CG1397-RA">
    <molecule id="Q9VZ21-1"/>
    <property type="organism name" value="d. melanogaster"/>
</dbReference>
<dbReference type="AGR" id="FB:FBgn0261277"/>
<dbReference type="CTD" id="32056"/>
<dbReference type="FlyBase" id="FBgn0261277">
    <property type="gene designation" value="rtv"/>
</dbReference>
<dbReference type="VEuPathDB" id="VectorBase:FBgn0261277"/>
<dbReference type="eggNOG" id="ENOG502S150">
    <property type="taxonomic scope" value="Eukaryota"/>
</dbReference>
<dbReference type="HOGENOM" id="CLU_129648_0_0_1"/>
<dbReference type="InParanoid" id="Q9VZ21"/>
<dbReference type="OMA" id="SCKDPFN"/>
<dbReference type="OrthoDB" id="9988013at2759"/>
<dbReference type="BioGRID-ORCS" id="32056">
    <property type="hits" value="0 hits in 1 CRISPR screen"/>
</dbReference>
<dbReference type="ChiTaRS" id="rtv">
    <property type="organism name" value="fly"/>
</dbReference>
<dbReference type="GenomeRNAi" id="32056"/>
<dbReference type="Proteomes" id="UP000000803">
    <property type="component" value="Chromosome X"/>
</dbReference>
<dbReference type="Bgee" id="FBgn0261277">
    <property type="expression patterns" value="Expressed in wing disc and 34 other cell types or tissues"/>
</dbReference>
<dbReference type="ExpressionAtlas" id="Q9VZ21">
    <property type="expression patterns" value="baseline and differential"/>
</dbReference>
<dbReference type="GO" id="GO:0005886">
    <property type="term" value="C:plasma membrane"/>
    <property type="evidence" value="ECO:0000318"/>
    <property type="project" value="GO_Central"/>
</dbReference>
<dbReference type="GO" id="GO:0098552">
    <property type="term" value="C:side of membrane"/>
    <property type="evidence" value="ECO:0007669"/>
    <property type="project" value="UniProtKB-KW"/>
</dbReference>
<dbReference type="GO" id="GO:0008362">
    <property type="term" value="P:chitin-based embryonic cuticle biosynthetic process"/>
    <property type="evidence" value="ECO:0000315"/>
    <property type="project" value="FlyBase"/>
</dbReference>
<dbReference type="GO" id="GO:0042335">
    <property type="term" value="P:cuticle development"/>
    <property type="evidence" value="ECO:0000315"/>
    <property type="project" value="UniProtKB"/>
</dbReference>
<dbReference type="GO" id="GO:0007424">
    <property type="term" value="P:open tracheal system development"/>
    <property type="evidence" value="ECO:0000315"/>
    <property type="project" value="FlyBase"/>
</dbReference>
<dbReference type="GO" id="GO:0032222">
    <property type="term" value="P:regulation of synaptic transmission, cholinergic"/>
    <property type="evidence" value="ECO:0007669"/>
    <property type="project" value="InterPro"/>
</dbReference>
<dbReference type="GO" id="GO:0035152">
    <property type="term" value="P:regulation of tube architecture, open tracheal system"/>
    <property type="evidence" value="ECO:0000315"/>
    <property type="project" value="FlyBase"/>
</dbReference>
<dbReference type="GO" id="GO:0035158">
    <property type="term" value="P:regulation of tube diameter, open tracheal system"/>
    <property type="evidence" value="ECO:0000315"/>
    <property type="project" value="FlyBase"/>
</dbReference>
<dbReference type="GO" id="GO:0030431">
    <property type="term" value="P:sleep"/>
    <property type="evidence" value="ECO:0007669"/>
    <property type="project" value="InterPro"/>
</dbReference>
<dbReference type="CDD" id="cd23589">
    <property type="entry name" value="TFP_LU_ECD_Rtv"/>
    <property type="match status" value="1"/>
</dbReference>
<dbReference type="InterPro" id="IPR031424">
    <property type="entry name" value="QVR-like"/>
</dbReference>
<dbReference type="InterPro" id="IPR050975">
    <property type="entry name" value="Sleep_regulator"/>
</dbReference>
<dbReference type="PANTHER" id="PTHR33562">
    <property type="entry name" value="ATILLA, ISOFORM B-RELATED-RELATED"/>
    <property type="match status" value="1"/>
</dbReference>
<dbReference type="PANTHER" id="PTHR33562:SF22">
    <property type="entry name" value="PROTEIN QUIVER"/>
    <property type="match status" value="1"/>
</dbReference>
<dbReference type="Pfam" id="PF17064">
    <property type="entry name" value="QVR"/>
    <property type="match status" value="1"/>
</dbReference>
<accession>Q9VZ21</accession>
<accession>M9PJI2</accession>
<comment type="function">
    <text evidence="4 5 6">Required for chitin fiber assembly and organization involved in cuticle formation and tracheal development.</text>
</comment>
<comment type="subcellular location">
    <subcellularLocation>
        <location evidence="3">Cell membrane</location>
        <topology evidence="3">Lipid-anchor</topology>
        <topology evidence="3">GPI-anchor</topology>
    </subcellularLocation>
</comment>
<comment type="alternative products">
    <event type="alternative splicing"/>
    <isoform>
        <id>Q9VZ21-1</id>
        <name evidence="21">A</name>
        <name evidence="21">B</name>
        <name evidence="21">D</name>
        <sequence type="displayed"/>
    </isoform>
    <isoform>
        <id>Q9VZ21-2</id>
        <name evidence="21">C</name>
        <sequence type="described" ref="VSP_062239"/>
    </isoform>
</comment>
<comment type="developmental stage">
    <text evidence="4">Expression coincides with formation of the procuticle in the developing head skeleton, pharynx and trachea at stage 16 and 17 of embryogenesis, and in epidermal cells at stage 17.</text>
</comment>
<comment type="disruption phenotype">
    <text evidence="4 5 6">Larval lethal as larvae are unable to hatch (PubMed:15844167). Larvae are hyperactive and occasionally change orientation in the egg case (PubMed:15844167). Tissues that produce a chitin cuticle, such as the skull and the trachea, fail to form properly (PubMed:15844167, PubMed:16339194). Disorganization of chitin fibers in the cuticle and in the trachea (PubMed:15844167, PubMed:16339194, PubMed:19502482). Elongated and convoluted tracheal dorsal trunk with tracheal lumen expansion defects in stage 14 to 16 embryos, possibly due to uncoordinated apical cell surface expansion (PubMed:16339194, PubMed:19502482). Detachment of the cuticle from the underlying epidermis allowing it to expand giving a bloated phenotype (PubMed:15844167).</text>
</comment>
<comment type="miscellaneous">
    <text evidence="7">The name 'retroactive' likely refers to the propensity of hyperactive larvae to change orientation within the egg case.</text>
</comment>
<comment type="similarity">
    <text evidence="3">Belongs to the quiver family.</text>
</comment>
<sequence>MQFTSLLLAVIFLISLVSIDGLLRRCYQCRSRGELGSCKDPFTFNATDVEQEPGVAAIPCASGWCGKVIEGGGTYAIDDYDLAIQRMCVQRGPDDNMDRCADTIYNYKKVYMCFCQGDLCNGARSWSSAPQMILITMLPLLGSWLLQRMRN</sequence>
<organism evidence="22">
    <name type="scientific">Drosophila melanogaster</name>
    <name type="common">Fruit fly</name>
    <dbReference type="NCBI Taxonomy" id="7227"/>
    <lineage>
        <taxon>Eukaryota</taxon>
        <taxon>Metazoa</taxon>
        <taxon>Ecdysozoa</taxon>
        <taxon>Arthropoda</taxon>
        <taxon>Hexapoda</taxon>
        <taxon>Insecta</taxon>
        <taxon>Pterygota</taxon>
        <taxon>Neoptera</taxon>
        <taxon>Endopterygota</taxon>
        <taxon>Diptera</taxon>
        <taxon>Brachycera</taxon>
        <taxon>Muscomorpha</taxon>
        <taxon>Ephydroidea</taxon>
        <taxon>Drosophilidae</taxon>
        <taxon>Drosophila</taxon>
        <taxon>Sophophora</taxon>
    </lineage>
</organism>
<proteinExistence type="evidence at transcript level"/>
<keyword id="KW-0025">Alternative splicing</keyword>
<keyword id="KW-1003">Cell membrane</keyword>
<keyword id="KW-1015">Disulfide bond</keyword>
<keyword id="KW-0325">Glycoprotein</keyword>
<keyword id="KW-0336">GPI-anchor</keyword>
<keyword id="KW-0449">Lipoprotein</keyword>
<keyword id="KW-0472">Membrane</keyword>
<keyword id="KW-1185">Reference proteome</keyword>
<keyword id="KW-0732">Signal</keyword>
<keyword id="KW-0812">Transmembrane</keyword>
<keyword id="KW-1133">Transmembrane helix</keyword>
<name>RTRV_DROME</name>
<protein>
    <recommendedName>
        <fullName evidence="7">UPAR/Ly6 domain-containing protein rtv</fullName>
    </recommendedName>
    <alternativeName>
        <fullName evidence="7">Protein retroactive</fullName>
    </alternativeName>
</protein>
<feature type="signal peptide" evidence="1">
    <location>
        <begin position="1"/>
        <end position="19"/>
    </location>
</feature>
<feature type="chain" id="PRO_5015020178" description="UPAR/Ly6 domain-containing protein rtv" evidence="1">
    <location>
        <begin position="20"/>
        <end position="121"/>
    </location>
</feature>
<feature type="propeptide" id="PRO_0000459700" description="Removed in mature form" evidence="1">
    <location>
        <begin position="122"/>
        <end position="151"/>
    </location>
</feature>
<feature type="topological domain" description="Extracellular" evidence="7">
    <location>
        <begin position="20"/>
        <end position="125"/>
    </location>
</feature>
<feature type="transmembrane region" description="Helical" evidence="1">
    <location>
        <begin position="126"/>
        <end position="146"/>
    </location>
</feature>
<feature type="topological domain" description="Cytoplasmic" evidence="7">
    <location>
        <begin position="147"/>
        <end position="151"/>
    </location>
</feature>
<feature type="lipid moiety-binding region" description="GPI-anchor amidated asparagine" evidence="1">
    <location>
        <position position="121"/>
    </location>
</feature>
<feature type="glycosylation site" description="N-linked (GlcNAc...) asparagine" evidence="2">
    <location>
        <position position="45"/>
    </location>
</feature>
<feature type="disulfide bond" evidence="8">
    <location>
        <begin position="26"/>
        <end position="65"/>
    </location>
</feature>
<feature type="disulfide bond" evidence="8">
    <location>
        <begin position="29"/>
        <end position="38"/>
    </location>
</feature>
<feature type="disulfide bond" evidence="8">
    <location>
        <begin position="60"/>
        <end position="88"/>
    </location>
</feature>
<feature type="disulfide bond" evidence="8">
    <location>
        <begin position="100"/>
        <end position="113"/>
    </location>
</feature>
<feature type="disulfide bond" evidence="8">
    <location>
        <begin position="115"/>
        <end position="120"/>
    </location>
</feature>
<feature type="splice variant" id="VSP_062239" description="In isoform C.">
    <location>
        <begin position="1"/>
        <end position="86"/>
    </location>
</feature>